<reference key="1">
    <citation type="journal article" date="1998" name="Science">
        <title>Genome sequence of the nematode C. elegans: a platform for investigating biology.</title>
        <authorList>
            <consortium name="The C. elegans sequencing consortium"/>
        </authorList>
    </citation>
    <scope>NUCLEOTIDE SEQUENCE [LARGE SCALE GENOMIC DNA]</scope>
    <source>
        <strain>Bristol N2</strain>
    </source>
</reference>
<evidence type="ECO:0000250" key="1"/>
<evidence type="ECO:0000250" key="2">
    <source>
        <dbReference type="UniProtKB" id="P18708"/>
    </source>
</evidence>
<evidence type="ECO:0000305" key="3"/>
<dbReference type="EC" id="3.6.4.6"/>
<dbReference type="EMBL" id="Z96100">
    <property type="protein sequence ID" value="CAB09531.1"/>
    <property type="molecule type" value="Genomic_DNA"/>
</dbReference>
<dbReference type="EMBL" id="Z79698">
    <property type="protein sequence ID" value="CAB09531.1"/>
    <property type="status" value="JOINED"/>
    <property type="molecule type" value="Genomic_DNA"/>
</dbReference>
<dbReference type="PIR" id="T23096">
    <property type="entry name" value="T23096"/>
</dbReference>
<dbReference type="RefSeq" id="NP_001076603.1">
    <property type="nucleotide sequence ID" value="NM_001083134.4"/>
</dbReference>
<dbReference type="SMR" id="Q94392"/>
<dbReference type="BioGRID" id="57330">
    <property type="interactions" value="9"/>
</dbReference>
<dbReference type="DIP" id="DIP-24326N"/>
<dbReference type="FunCoup" id="Q94392">
    <property type="interactions" value="2689"/>
</dbReference>
<dbReference type="IntAct" id="Q94392">
    <property type="interactions" value="4"/>
</dbReference>
<dbReference type="STRING" id="6239.H15N14.2a.1"/>
<dbReference type="PaxDb" id="6239-H15N14.2a"/>
<dbReference type="PeptideAtlas" id="Q94392"/>
<dbReference type="EnsemblMetazoa" id="H15N14.2a.1">
    <property type="protein sequence ID" value="H15N14.2a.1"/>
    <property type="gene ID" value="WBGene00003818"/>
</dbReference>
<dbReference type="GeneID" id="266842"/>
<dbReference type="KEGG" id="cel:CELE_H15N14.2"/>
<dbReference type="UCSC" id="H15N14.2a">
    <property type="organism name" value="c. elegans"/>
</dbReference>
<dbReference type="AGR" id="WB:WBGene00003818"/>
<dbReference type="CTD" id="266842"/>
<dbReference type="WormBase" id="H15N14.2a">
    <property type="protein sequence ID" value="CE19925"/>
    <property type="gene ID" value="WBGene00003818"/>
    <property type="gene designation" value="nsf-1"/>
</dbReference>
<dbReference type="eggNOG" id="KOG0741">
    <property type="taxonomic scope" value="Eukaryota"/>
</dbReference>
<dbReference type="GeneTree" id="ENSGT00530000064085"/>
<dbReference type="InParanoid" id="Q94392"/>
<dbReference type="OMA" id="CFDNEIA"/>
<dbReference type="OrthoDB" id="9982946at2759"/>
<dbReference type="PhylomeDB" id="Q94392"/>
<dbReference type="Reactome" id="R-CEL-204005">
    <property type="pathway name" value="COPII-mediated vesicle transport"/>
</dbReference>
<dbReference type="Reactome" id="R-CEL-6807878">
    <property type="pathway name" value="COPI-mediated anterograde transport"/>
</dbReference>
<dbReference type="Reactome" id="R-CEL-6811434">
    <property type="pathway name" value="COPI-dependent Golgi-to-ER retrograde traffic"/>
</dbReference>
<dbReference type="Reactome" id="R-CEL-6811438">
    <property type="pathway name" value="Intra-Golgi traffic"/>
</dbReference>
<dbReference type="Reactome" id="R-CEL-6811440">
    <property type="pathway name" value="Retrograde transport at the Trans-Golgi-Network"/>
</dbReference>
<dbReference type="SignaLink" id="Q94392"/>
<dbReference type="PRO" id="PR:Q94392"/>
<dbReference type="Proteomes" id="UP000001940">
    <property type="component" value="Chromosome I"/>
</dbReference>
<dbReference type="Bgee" id="WBGene00003818">
    <property type="expression patterns" value="Expressed in pharyngeal muscle cell (C elegans) and 4 other cell types or tissues"/>
</dbReference>
<dbReference type="ExpressionAtlas" id="Q94392">
    <property type="expression patterns" value="baseline and differential"/>
</dbReference>
<dbReference type="GO" id="GO:0005795">
    <property type="term" value="C:Golgi stack"/>
    <property type="evidence" value="ECO:0000318"/>
    <property type="project" value="GO_Central"/>
</dbReference>
<dbReference type="GO" id="GO:0005524">
    <property type="term" value="F:ATP binding"/>
    <property type="evidence" value="ECO:0007669"/>
    <property type="project" value="UniProtKB-KW"/>
</dbReference>
<dbReference type="GO" id="GO:0016887">
    <property type="term" value="F:ATP hydrolysis activity"/>
    <property type="evidence" value="ECO:0000318"/>
    <property type="project" value="GO_Central"/>
</dbReference>
<dbReference type="GO" id="GO:0046872">
    <property type="term" value="F:metal ion binding"/>
    <property type="evidence" value="ECO:0007669"/>
    <property type="project" value="UniProtKB-KW"/>
</dbReference>
<dbReference type="GO" id="GO:0043001">
    <property type="term" value="P:Golgi to plasma membrane protein transport"/>
    <property type="evidence" value="ECO:0000318"/>
    <property type="project" value="GO_Central"/>
</dbReference>
<dbReference type="GO" id="GO:0006891">
    <property type="term" value="P:intra-Golgi vesicle-mediated transport"/>
    <property type="evidence" value="ECO:0000318"/>
    <property type="project" value="GO_Central"/>
</dbReference>
<dbReference type="GO" id="GO:0036498">
    <property type="term" value="P:IRE1-mediated unfolded protein response"/>
    <property type="evidence" value="ECO:0007007"/>
    <property type="project" value="WormBase"/>
</dbReference>
<dbReference type="GO" id="GO:0035494">
    <property type="term" value="P:SNARE complex disassembly"/>
    <property type="evidence" value="ECO:0007669"/>
    <property type="project" value="InterPro"/>
</dbReference>
<dbReference type="CDD" id="cd00009">
    <property type="entry name" value="AAA"/>
    <property type="match status" value="1"/>
</dbReference>
<dbReference type="CDD" id="cd19504">
    <property type="entry name" value="RecA-like_NSF-SEC18_r1-like"/>
    <property type="match status" value="1"/>
</dbReference>
<dbReference type="FunFam" id="1.10.8.60:FF:000334">
    <property type="entry name" value="Vesicle-fusing ATPase"/>
    <property type="match status" value="1"/>
</dbReference>
<dbReference type="FunFam" id="3.10.330.10:FF:000028">
    <property type="entry name" value="Vesicle-fusing ATPase"/>
    <property type="match status" value="1"/>
</dbReference>
<dbReference type="FunFam" id="1.10.8.60:FF:000026">
    <property type="entry name" value="vesicle-fusing ATPase isoform X1"/>
    <property type="match status" value="1"/>
</dbReference>
<dbReference type="FunFam" id="2.40.40.20:FF:000012">
    <property type="entry name" value="Vesicle-fusing ATPase protein"/>
    <property type="match status" value="1"/>
</dbReference>
<dbReference type="FunFam" id="3.40.50.300:FF:002373">
    <property type="entry name" value="Vesicle-fusing ATPase, putative"/>
    <property type="match status" value="1"/>
</dbReference>
<dbReference type="FunFam" id="3.40.50.300:FF:000187">
    <property type="entry name" value="Vesicular-fusion ATPase SEC18"/>
    <property type="match status" value="1"/>
</dbReference>
<dbReference type="Gene3D" id="1.10.8.60">
    <property type="match status" value="2"/>
</dbReference>
<dbReference type="Gene3D" id="2.40.40.20">
    <property type="match status" value="1"/>
</dbReference>
<dbReference type="Gene3D" id="3.10.330.10">
    <property type="match status" value="1"/>
</dbReference>
<dbReference type="Gene3D" id="3.40.50.300">
    <property type="entry name" value="P-loop containing nucleotide triphosphate hydrolases"/>
    <property type="match status" value="2"/>
</dbReference>
<dbReference type="InterPro" id="IPR003593">
    <property type="entry name" value="AAA+_ATPase"/>
</dbReference>
<dbReference type="InterPro" id="IPR041569">
    <property type="entry name" value="AAA_lid_3"/>
</dbReference>
<dbReference type="InterPro" id="IPR009010">
    <property type="entry name" value="Asp_de-COase-like_dom_sf"/>
</dbReference>
<dbReference type="InterPro" id="IPR003959">
    <property type="entry name" value="ATPase_AAA_core"/>
</dbReference>
<dbReference type="InterPro" id="IPR003960">
    <property type="entry name" value="ATPase_AAA_CS"/>
</dbReference>
<dbReference type="InterPro" id="IPR004201">
    <property type="entry name" value="Cdc48_dom2"/>
</dbReference>
<dbReference type="InterPro" id="IPR029067">
    <property type="entry name" value="CDC48_domain_2-like_sf"/>
</dbReference>
<dbReference type="InterPro" id="IPR003338">
    <property type="entry name" value="CDC4_N-term_subdom"/>
</dbReference>
<dbReference type="InterPro" id="IPR054419">
    <property type="entry name" value="NSF_ATPase_lid"/>
</dbReference>
<dbReference type="InterPro" id="IPR027417">
    <property type="entry name" value="P-loop_NTPase"/>
</dbReference>
<dbReference type="InterPro" id="IPR039812">
    <property type="entry name" value="Vesicle-fus_ATPase"/>
</dbReference>
<dbReference type="PANTHER" id="PTHR23078:SF3">
    <property type="entry name" value="VESICLE-FUSING ATPASE"/>
    <property type="match status" value="1"/>
</dbReference>
<dbReference type="PANTHER" id="PTHR23078">
    <property type="entry name" value="VESICULAR-FUSION PROTEIN NSF"/>
    <property type="match status" value="1"/>
</dbReference>
<dbReference type="Pfam" id="PF00004">
    <property type="entry name" value="AAA"/>
    <property type="match status" value="2"/>
</dbReference>
<dbReference type="Pfam" id="PF17862">
    <property type="entry name" value="AAA_lid_3"/>
    <property type="match status" value="1"/>
</dbReference>
<dbReference type="Pfam" id="PF02933">
    <property type="entry name" value="CDC48_2"/>
    <property type="match status" value="1"/>
</dbReference>
<dbReference type="Pfam" id="PF02359">
    <property type="entry name" value="CDC48_N"/>
    <property type="match status" value="1"/>
</dbReference>
<dbReference type="Pfam" id="PF21964">
    <property type="entry name" value="NSF_ATPase_lid"/>
    <property type="match status" value="1"/>
</dbReference>
<dbReference type="SMART" id="SM00382">
    <property type="entry name" value="AAA"/>
    <property type="match status" value="2"/>
</dbReference>
<dbReference type="SMART" id="SM01073">
    <property type="entry name" value="CDC48_N"/>
    <property type="match status" value="1"/>
</dbReference>
<dbReference type="SUPFAM" id="SSF50692">
    <property type="entry name" value="ADC-like"/>
    <property type="match status" value="1"/>
</dbReference>
<dbReference type="SUPFAM" id="SSF54585">
    <property type="entry name" value="Cdc48 domain 2-like"/>
    <property type="match status" value="1"/>
</dbReference>
<dbReference type="SUPFAM" id="SSF52540">
    <property type="entry name" value="P-loop containing nucleoside triphosphate hydrolases"/>
    <property type="match status" value="2"/>
</dbReference>
<dbReference type="PROSITE" id="PS00674">
    <property type="entry name" value="AAA"/>
    <property type="match status" value="1"/>
</dbReference>
<protein>
    <recommendedName>
        <fullName>Vesicle-fusing ATPase</fullName>
        <ecNumber>3.6.4.6</ecNumber>
    </recommendedName>
    <alternativeName>
        <fullName>N-ethylmaleimide-sensitive fusion protein</fullName>
        <shortName>NEM-sensitive fusion protein</shortName>
    </alternativeName>
    <alternativeName>
        <fullName>Vesicular-fusion protein NSF</fullName>
    </alternativeName>
</protein>
<accession>Q94392</accession>
<organism>
    <name type="scientific">Caenorhabditis elegans</name>
    <dbReference type="NCBI Taxonomy" id="6239"/>
    <lineage>
        <taxon>Eukaryota</taxon>
        <taxon>Metazoa</taxon>
        <taxon>Ecdysozoa</taxon>
        <taxon>Nematoda</taxon>
        <taxon>Chromadorea</taxon>
        <taxon>Rhabditida</taxon>
        <taxon>Rhabditina</taxon>
        <taxon>Rhabditomorpha</taxon>
        <taxon>Rhabditoidea</taxon>
        <taxon>Rhabditidae</taxon>
        <taxon>Peloderinae</taxon>
        <taxon>Caenorhabditis</taxon>
    </lineage>
</organism>
<feature type="chain" id="PRO_0000084565" description="Vesicle-fusing ATPase">
    <location>
        <begin position="1"/>
        <end position="824"/>
    </location>
</feature>
<feature type="binding site" evidence="2">
    <location>
        <begin position="582"/>
        <end position="587"/>
    </location>
    <ligand>
        <name>ATP</name>
        <dbReference type="ChEBI" id="CHEBI:30616"/>
    </ligand>
</feature>
<feature type="binding site" evidence="2">
    <location>
        <begin position="622"/>
        <end position="629"/>
    </location>
    <ligand>
        <name>ATP</name>
        <dbReference type="ChEBI" id="CHEBI:30616"/>
    </ligand>
</feature>
<feature type="binding site" evidence="2">
    <location>
        <position position="627"/>
    </location>
    <ligand>
        <name>Mg(2+)</name>
        <dbReference type="ChEBI" id="CHEBI:18420"/>
    </ligand>
</feature>
<gene>
    <name type="primary">nsf-1</name>
    <name type="ORF">H15N14.2</name>
</gene>
<comment type="function">
    <text evidence="1">Required for vesicle-mediated transport. Catalyzes the fusion of transport vesicles within the Golgi cisternae. Is also required for transport from the endoplasmic reticulum to the Golgi stack. Seems to function as a fusion protein required for the delivery of cargo proteins to all compartments of the Golgi stack independent of vesicle origin (By similarity).</text>
</comment>
<comment type="catalytic activity">
    <reaction>
        <text>ATP + H2O = ADP + phosphate + H(+)</text>
        <dbReference type="Rhea" id="RHEA:13065"/>
        <dbReference type="ChEBI" id="CHEBI:15377"/>
        <dbReference type="ChEBI" id="CHEBI:15378"/>
        <dbReference type="ChEBI" id="CHEBI:30616"/>
        <dbReference type="ChEBI" id="CHEBI:43474"/>
        <dbReference type="ChEBI" id="CHEBI:456216"/>
        <dbReference type="EC" id="3.6.4.6"/>
    </reaction>
</comment>
<comment type="cofactor">
    <cofactor evidence="2">
        <name>Mg(2+)</name>
        <dbReference type="ChEBI" id="CHEBI:18420"/>
    </cofactor>
    <text evidence="2">Binds 1 Mg(2+) ion per subunit.</text>
</comment>
<comment type="subunit">
    <text evidence="1">Homohexamer.</text>
</comment>
<comment type="interaction">
    <interactant intactId="EBI-316816">
        <id>Q94392</id>
    </interactant>
    <interactant intactId="EBI-316403">
        <id>Q22227</id>
        <label>mig-5</label>
    </interactant>
    <organismsDiffer>false</organismsDiffer>
    <experiments>3</experiments>
</comment>
<comment type="interaction">
    <interactant intactId="EBI-316816">
        <id>Q94392</id>
    </interactant>
    <interactant intactId="EBI-318271">
        <id>Q27488</id>
        <label>pas-2</label>
    </interactant>
    <organismsDiffer>false</organismsDiffer>
    <experiments>3</experiments>
</comment>
<comment type="subcellular location">
    <subcellularLocation>
        <location>Cytoplasm</location>
    </subcellularLocation>
</comment>
<comment type="similarity">
    <text evidence="3">Belongs to the AAA ATPase family.</text>
</comment>
<proteinExistence type="evidence at protein level"/>
<name>NSF_CAEEL</name>
<sequence length="824" mass="91335">MSPVPCLSTCCCFRKIVEYSTMSWFRKSANDSLLETNHDRIPVAPPREVRAPSPRLPPSYQTSNEKMFRVRKAPSEEHTLANYAYVNRSDFDDKQIKHVRVNPGPAHHYIFSIRNDGSIKPGEIAFGVPHRKWAALSLDQEVRVTPFTFQQSEYVGSMILTADFNAKKNVTSEPLNADLMAREFSIQFGGQAFSKGMQMAFRFEDKEKNKTHTLSLVVKSIEGFDIGKAAAAASGASNTDSSATKPKQIEAGELLPNSVIVFDKEEGSMLNLIGKSKGKSAYRSIINPDWDFQQMGIGGLDTEFSHIFRRAFASRVFPPEFIEQLGMKHVRGILLFGPPGTGKTLMARQIGKMLNAREPKIVNGPQILDKYVGESESNVRKLFADAEEEWRRCGANSGLHIIIFDEIDAICKQRGSMAGSSSVHDTVVNQLLSKMDGVEQLNNILVIGMTNRRDMIDEALLRPGRLEVQMEVSLPDETGRLQILKIHTARMREYNKMDPNVDLEDISKRTKNFSGAELEGLVRAAQSSAMNRLVKAGGKAQADPDAIEKLAINSGDFDYALENDIKPAFGRSDESLNRFLSRGMIVWGPEVTKILDEGSLLAATVKNPENSGFRTVVLAGAAKTGKTSLAAQMAKSSDFPFVKVISPEDTVGFSESAKCMALKKAFEDAKRSKLSVLLIDNLERLIDYHPVGPRYSNLVIQALLVLLNAPPPAGHRLFVIATSSDRMFLRDMGLMDVFGDVIDIPKLTTAGQMMNVIQESNIYSDDQLPMIEQKLASICRGEGFHGVGIKHLLELIESARQCEADYRVPTLLNMMEGLALNLYR</sequence>
<keyword id="KW-0067">ATP-binding</keyword>
<keyword id="KW-0963">Cytoplasm</keyword>
<keyword id="KW-0378">Hydrolase</keyword>
<keyword id="KW-0460">Magnesium</keyword>
<keyword id="KW-0479">Metal-binding</keyword>
<keyword id="KW-0547">Nucleotide-binding</keyword>
<keyword id="KW-0653">Protein transport</keyword>
<keyword id="KW-1185">Reference proteome</keyword>
<keyword id="KW-0677">Repeat</keyword>
<keyword id="KW-0813">Transport</keyword>